<gene>
    <name type="primary">Hesx1</name>
    <name type="synonym">Hes-1</name>
    <name type="synonym">Rpx</name>
</gene>
<accession>Q61658</accession>
<accession>Q61047</accession>
<accession>Q8C477</accession>
<evidence type="ECO:0000250" key="1"/>
<evidence type="ECO:0000255" key="2">
    <source>
        <dbReference type="PROSITE-ProRule" id="PRU00108"/>
    </source>
</evidence>
<evidence type="ECO:0000256" key="3">
    <source>
        <dbReference type="SAM" id="MobiDB-lite"/>
    </source>
</evidence>
<evidence type="ECO:0000269" key="4">
    <source>
    </source>
</evidence>
<evidence type="ECO:0000269" key="5">
    <source>
    </source>
</evidence>
<evidence type="ECO:0000305" key="6"/>
<keyword id="KW-0217">Developmental protein</keyword>
<keyword id="KW-0238">DNA-binding</keyword>
<keyword id="KW-0371">Homeobox</keyword>
<keyword id="KW-0539">Nucleus</keyword>
<keyword id="KW-1185">Reference proteome</keyword>
<keyword id="KW-0804">Transcription</keyword>
<keyword id="KW-0805">Transcription regulation</keyword>
<proteinExistence type="evidence at transcript level"/>
<feature type="chain" id="PRO_0000048923" description="Homeobox expressed in ES cells 1">
    <location>
        <begin position="1"/>
        <end position="185"/>
    </location>
</feature>
<feature type="DNA-binding region" description="Homeobox" evidence="2">
    <location>
        <begin position="108"/>
        <end position="167"/>
    </location>
</feature>
<feature type="region of interest" description="Disordered" evidence="3">
    <location>
        <begin position="32"/>
        <end position="69"/>
    </location>
</feature>
<feature type="sequence conflict" description="In Ref. 1; CAA56344 and 2; AAA97869." evidence="6" ref="1 2">
    <original>D</original>
    <variation>N</variation>
    <location>
        <position position="51"/>
    </location>
</feature>
<feature type="sequence conflict" description="In Ref. 1; CAA56344 and 2; AAA97869." evidence="6" ref="1 2">
    <original>G</original>
    <variation>D</variation>
    <location>
        <position position="55"/>
    </location>
</feature>
<feature type="sequence conflict" description="In Ref. 1; CAA56344." evidence="6" ref="1">
    <original>K</original>
    <variation>R</variation>
    <location>
        <position position="176"/>
    </location>
</feature>
<organism>
    <name type="scientific">Mus musculus</name>
    <name type="common">Mouse</name>
    <dbReference type="NCBI Taxonomy" id="10090"/>
    <lineage>
        <taxon>Eukaryota</taxon>
        <taxon>Metazoa</taxon>
        <taxon>Chordata</taxon>
        <taxon>Craniata</taxon>
        <taxon>Vertebrata</taxon>
        <taxon>Euteleostomi</taxon>
        <taxon>Mammalia</taxon>
        <taxon>Eutheria</taxon>
        <taxon>Euarchontoglires</taxon>
        <taxon>Glires</taxon>
        <taxon>Rodentia</taxon>
        <taxon>Myomorpha</taxon>
        <taxon>Muroidea</taxon>
        <taxon>Muridae</taxon>
        <taxon>Murinae</taxon>
        <taxon>Mus</taxon>
        <taxon>Mus</taxon>
    </lineage>
</organism>
<name>HESX1_MOUSE</name>
<reference key="1">
    <citation type="journal article" date="1995" name="J. Biol. Chem.">
        <title>Sequence, genomic organization, and expression of the novel homeobox gene Hesx1.</title>
        <authorList>
            <person name="Thomas P.Q."/>
            <person name="Johnson B.V."/>
            <person name="Rathjen J."/>
            <person name="Rathjen P.D."/>
        </authorList>
    </citation>
    <scope>NUCLEOTIDE SEQUENCE [MRNA]</scope>
    <source>
        <strain>129/Sv</strain>
        <tissue>Embryonic stem cell</tissue>
    </source>
</reference>
<reference key="2">
    <citation type="journal article" date="1996" name="Development">
        <title>Rpx: a novel anterior-restricted homeobox gene progressively activated in the prechordal plate, anterior neural plate and Rathke's pouch of the mouse embryo.</title>
        <authorList>
            <person name="Hermesz E."/>
            <person name="Mackem S."/>
            <person name="Mahon K.A."/>
        </authorList>
    </citation>
    <scope>NUCLEOTIDE SEQUENCE [MRNA]</scope>
    <source>
        <tissue>Embryo</tissue>
    </source>
</reference>
<reference key="3">
    <citation type="journal article" date="2005" name="Science">
        <title>The transcriptional landscape of the mammalian genome.</title>
        <authorList>
            <person name="Carninci P."/>
            <person name="Kasukawa T."/>
            <person name="Katayama S."/>
            <person name="Gough J."/>
            <person name="Frith M.C."/>
            <person name="Maeda N."/>
            <person name="Oyama R."/>
            <person name="Ravasi T."/>
            <person name="Lenhard B."/>
            <person name="Wells C."/>
            <person name="Kodzius R."/>
            <person name="Shimokawa K."/>
            <person name="Bajic V.B."/>
            <person name="Brenner S.E."/>
            <person name="Batalov S."/>
            <person name="Forrest A.R."/>
            <person name="Zavolan M."/>
            <person name="Davis M.J."/>
            <person name="Wilming L.G."/>
            <person name="Aidinis V."/>
            <person name="Allen J.E."/>
            <person name="Ambesi-Impiombato A."/>
            <person name="Apweiler R."/>
            <person name="Aturaliya R.N."/>
            <person name="Bailey T.L."/>
            <person name="Bansal M."/>
            <person name="Baxter L."/>
            <person name="Beisel K.W."/>
            <person name="Bersano T."/>
            <person name="Bono H."/>
            <person name="Chalk A.M."/>
            <person name="Chiu K.P."/>
            <person name="Choudhary V."/>
            <person name="Christoffels A."/>
            <person name="Clutterbuck D.R."/>
            <person name="Crowe M.L."/>
            <person name="Dalla E."/>
            <person name="Dalrymple B.P."/>
            <person name="de Bono B."/>
            <person name="Della Gatta G."/>
            <person name="di Bernardo D."/>
            <person name="Down T."/>
            <person name="Engstrom P."/>
            <person name="Fagiolini M."/>
            <person name="Faulkner G."/>
            <person name="Fletcher C.F."/>
            <person name="Fukushima T."/>
            <person name="Furuno M."/>
            <person name="Futaki S."/>
            <person name="Gariboldi M."/>
            <person name="Georgii-Hemming P."/>
            <person name="Gingeras T.R."/>
            <person name="Gojobori T."/>
            <person name="Green R.E."/>
            <person name="Gustincich S."/>
            <person name="Harbers M."/>
            <person name="Hayashi Y."/>
            <person name="Hensch T.K."/>
            <person name="Hirokawa N."/>
            <person name="Hill D."/>
            <person name="Huminiecki L."/>
            <person name="Iacono M."/>
            <person name="Ikeo K."/>
            <person name="Iwama A."/>
            <person name="Ishikawa T."/>
            <person name="Jakt M."/>
            <person name="Kanapin A."/>
            <person name="Katoh M."/>
            <person name="Kawasawa Y."/>
            <person name="Kelso J."/>
            <person name="Kitamura H."/>
            <person name="Kitano H."/>
            <person name="Kollias G."/>
            <person name="Krishnan S.P."/>
            <person name="Kruger A."/>
            <person name="Kummerfeld S.K."/>
            <person name="Kurochkin I.V."/>
            <person name="Lareau L.F."/>
            <person name="Lazarevic D."/>
            <person name="Lipovich L."/>
            <person name="Liu J."/>
            <person name="Liuni S."/>
            <person name="McWilliam S."/>
            <person name="Madan Babu M."/>
            <person name="Madera M."/>
            <person name="Marchionni L."/>
            <person name="Matsuda H."/>
            <person name="Matsuzawa S."/>
            <person name="Miki H."/>
            <person name="Mignone F."/>
            <person name="Miyake S."/>
            <person name="Morris K."/>
            <person name="Mottagui-Tabar S."/>
            <person name="Mulder N."/>
            <person name="Nakano N."/>
            <person name="Nakauchi H."/>
            <person name="Ng P."/>
            <person name="Nilsson R."/>
            <person name="Nishiguchi S."/>
            <person name="Nishikawa S."/>
            <person name="Nori F."/>
            <person name="Ohara O."/>
            <person name="Okazaki Y."/>
            <person name="Orlando V."/>
            <person name="Pang K.C."/>
            <person name="Pavan W.J."/>
            <person name="Pavesi G."/>
            <person name="Pesole G."/>
            <person name="Petrovsky N."/>
            <person name="Piazza S."/>
            <person name="Reed J."/>
            <person name="Reid J.F."/>
            <person name="Ring B.Z."/>
            <person name="Ringwald M."/>
            <person name="Rost B."/>
            <person name="Ruan Y."/>
            <person name="Salzberg S.L."/>
            <person name="Sandelin A."/>
            <person name="Schneider C."/>
            <person name="Schoenbach C."/>
            <person name="Sekiguchi K."/>
            <person name="Semple C.A."/>
            <person name="Seno S."/>
            <person name="Sessa L."/>
            <person name="Sheng Y."/>
            <person name="Shibata Y."/>
            <person name="Shimada H."/>
            <person name="Shimada K."/>
            <person name="Silva D."/>
            <person name="Sinclair B."/>
            <person name="Sperling S."/>
            <person name="Stupka E."/>
            <person name="Sugiura K."/>
            <person name="Sultana R."/>
            <person name="Takenaka Y."/>
            <person name="Taki K."/>
            <person name="Tammoja K."/>
            <person name="Tan S.L."/>
            <person name="Tang S."/>
            <person name="Taylor M.S."/>
            <person name="Tegner J."/>
            <person name="Teichmann S.A."/>
            <person name="Ueda H.R."/>
            <person name="van Nimwegen E."/>
            <person name="Verardo R."/>
            <person name="Wei C.L."/>
            <person name="Yagi K."/>
            <person name="Yamanishi H."/>
            <person name="Zabarovsky E."/>
            <person name="Zhu S."/>
            <person name="Zimmer A."/>
            <person name="Hide W."/>
            <person name="Bult C."/>
            <person name="Grimmond S.M."/>
            <person name="Teasdale R.D."/>
            <person name="Liu E.T."/>
            <person name="Brusic V."/>
            <person name="Quackenbush J."/>
            <person name="Wahlestedt C."/>
            <person name="Mattick J.S."/>
            <person name="Hume D.A."/>
            <person name="Kai C."/>
            <person name="Sasaki D."/>
            <person name="Tomaru Y."/>
            <person name="Fukuda S."/>
            <person name="Kanamori-Katayama M."/>
            <person name="Suzuki M."/>
            <person name="Aoki J."/>
            <person name="Arakawa T."/>
            <person name="Iida J."/>
            <person name="Imamura K."/>
            <person name="Itoh M."/>
            <person name="Kato T."/>
            <person name="Kawaji H."/>
            <person name="Kawagashira N."/>
            <person name="Kawashima T."/>
            <person name="Kojima M."/>
            <person name="Kondo S."/>
            <person name="Konno H."/>
            <person name="Nakano K."/>
            <person name="Ninomiya N."/>
            <person name="Nishio T."/>
            <person name="Okada M."/>
            <person name="Plessy C."/>
            <person name="Shibata K."/>
            <person name="Shiraki T."/>
            <person name="Suzuki S."/>
            <person name="Tagami M."/>
            <person name="Waki K."/>
            <person name="Watahiki A."/>
            <person name="Okamura-Oho Y."/>
            <person name="Suzuki H."/>
            <person name="Kawai J."/>
            <person name="Hayashizaki Y."/>
        </authorList>
    </citation>
    <scope>NUCLEOTIDE SEQUENCE [LARGE SCALE MRNA]</scope>
    <source>
        <strain>C57BL/6J</strain>
    </source>
</reference>
<reference key="4">
    <citation type="journal article" date="2009" name="PLoS Biol.">
        <title>Lineage-specific biology revealed by a finished genome assembly of the mouse.</title>
        <authorList>
            <person name="Church D.M."/>
            <person name="Goodstadt L."/>
            <person name="Hillier L.W."/>
            <person name="Zody M.C."/>
            <person name="Goldstein S."/>
            <person name="She X."/>
            <person name="Bult C.J."/>
            <person name="Agarwala R."/>
            <person name="Cherry J.L."/>
            <person name="DiCuccio M."/>
            <person name="Hlavina W."/>
            <person name="Kapustin Y."/>
            <person name="Meric P."/>
            <person name="Maglott D."/>
            <person name="Birtle Z."/>
            <person name="Marques A.C."/>
            <person name="Graves T."/>
            <person name="Zhou S."/>
            <person name="Teague B."/>
            <person name="Potamousis K."/>
            <person name="Churas C."/>
            <person name="Place M."/>
            <person name="Herschleb J."/>
            <person name="Runnheim R."/>
            <person name="Forrest D."/>
            <person name="Amos-Landgraf J."/>
            <person name="Schwartz D.C."/>
            <person name="Cheng Z."/>
            <person name="Lindblad-Toh K."/>
            <person name="Eichler E.E."/>
            <person name="Ponting C.P."/>
        </authorList>
    </citation>
    <scope>NUCLEOTIDE SEQUENCE [LARGE SCALE GENOMIC DNA]</scope>
    <source>
        <strain>C57BL/6J</strain>
    </source>
</reference>
<reference key="5">
    <citation type="journal article" date="2004" name="Genome Res.">
        <title>The status, quality, and expansion of the NIH full-length cDNA project: the Mammalian Gene Collection (MGC).</title>
        <authorList>
            <consortium name="The MGC Project Team"/>
        </authorList>
    </citation>
    <scope>NUCLEOTIDE SEQUENCE [LARGE SCALE MRNA]</scope>
    <source>
        <tissue>Brain</tissue>
    </source>
</reference>
<reference key="6">
    <citation type="journal article" date="1992" name="Nucleic Acids Res.">
        <title>HES-1, a novel homeobox gene expressed by murine embryonic stem cells, identifies a new class of homeobox genes.</title>
        <authorList>
            <person name="Thomas P.Q."/>
            <person name="Rathjen P.D."/>
        </authorList>
    </citation>
    <scope>DEVELOPMENTAL STAGE</scope>
</reference>
<reference key="7">
    <citation type="journal article" date="1998" name="Nat. Genet.">
        <title>Mutations in the homeobox gene HESX1/Hesx1 associated with septo-optic dysplasia in human and mouse.</title>
        <authorList>
            <person name="Dattani M.T."/>
            <person name="Martinez-Barbera J.-P."/>
            <person name="Thomas P.Q."/>
            <person name="Brickman J.M."/>
            <person name="Gupta R."/>
            <person name="Maartensson I.-L."/>
            <person name="Toresson H."/>
            <person name="Fox M."/>
            <person name="Wales J.K.H."/>
            <person name="Hindmarsh P.C."/>
            <person name="Krauss S."/>
            <person name="Beddington R.S.P."/>
            <person name="Robinson I.C.A.F."/>
        </authorList>
    </citation>
    <scope>FUNCTION</scope>
</reference>
<comment type="function">
    <text evidence="5">Required for the normal development of the forebrain, eyes and other anterior structures such as the olfactory placodes and pituitary gland. Possible transcriptional repressor. Binds to the palindromic PIII sequence, 5'-AGCTTGAGTCTAATTGAATTAACTGTAC-3'. HESX1 and PROP1 bind as heterodimers on this palindromic site, and, in vitro, HESX1 can antagonize PROP1 activation.</text>
</comment>
<comment type="subunit">
    <text evidence="1">Can form heterodimers with PROP1 in binding to DNA Interacts with TLE1.</text>
</comment>
<comment type="subcellular location">
    <subcellularLocation>
        <location evidence="6">Nucleus</location>
    </subcellularLocation>
</comment>
<comment type="tissue specificity">
    <text>High levels found in the embryonic liver, lower level expression seen in the viscera, amnion and yolk sac.</text>
</comment>
<comment type="developmental stage">
    <text evidence="4">Early expression seen in the anterior midline endoderm and prechordal plate precursor, subsequently activated in the overlying ectoderm of the cephalic neural plate. Later disappears in the mesendoderm while remaining in the prospective prosencephalic region of the neural plate ectoderm, ultimately expression is restricted to Rathke pouch, the primordium of the pituitary. Expressed in embryonic stem cells.</text>
</comment>
<comment type="induction">
    <text>Down-regulated during embryonic stem (ES) cell differentiation.</text>
</comment>
<comment type="similarity">
    <text evidence="6">Belongs to the ANF homeobox family.</text>
</comment>
<sequence>MSPSLREGAQLRESKPAPCSFSIESILGLDQKKDCTTSVRPHRPWTDTCGDSEKGGNPPLHAPDLPSETSFPCPVDHPRPEERAPKYENYFSASETRSLKRELSWYRGRRPRTAFTQNQVEVLENVFRVNCYPGIDIREDLAQKLNLEEDRIQIWFQNRRAKMKRSRRESQFLMAKKPFNPDLLK</sequence>
<dbReference type="EMBL" id="X80040">
    <property type="protein sequence ID" value="CAA56344.1"/>
    <property type="molecule type" value="mRNA"/>
</dbReference>
<dbReference type="EMBL" id="U40720">
    <property type="protein sequence ID" value="AAA97869.1"/>
    <property type="molecule type" value="mRNA"/>
</dbReference>
<dbReference type="EMBL" id="AK082831">
    <property type="protein sequence ID" value="BAC38643.1"/>
    <property type="molecule type" value="mRNA"/>
</dbReference>
<dbReference type="EMBL" id="AC124603">
    <property type="status" value="NOT_ANNOTATED_CDS"/>
    <property type="molecule type" value="Genomic_DNA"/>
</dbReference>
<dbReference type="EMBL" id="BC132051">
    <property type="protein sequence ID" value="AAI32052.1"/>
    <property type="molecule type" value="mRNA"/>
</dbReference>
<dbReference type="EMBL" id="BC132053">
    <property type="protein sequence ID" value="AAI32054.1"/>
    <property type="molecule type" value="mRNA"/>
</dbReference>
<dbReference type="EMBL" id="BC145262">
    <property type="protein sequence ID" value="AAI45263.1"/>
    <property type="molecule type" value="mRNA"/>
</dbReference>
<dbReference type="CCDS" id="CCDS26884.1"/>
<dbReference type="PIR" id="A55882">
    <property type="entry name" value="A55882"/>
</dbReference>
<dbReference type="RefSeq" id="NP_001411398.1">
    <property type="nucleotide sequence ID" value="NM_001424469.1"/>
</dbReference>
<dbReference type="RefSeq" id="NP_034550.2">
    <property type="nucleotide sequence ID" value="NM_010420.3"/>
</dbReference>
<dbReference type="RefSeq" id="XP_006518633.1">
    <property type="nucleotide sequence ID" value="XM_006518570.3"/>
</dbReference>
<dbReference type="SMR" id="Q61658"/>
<dbReference type="BioGRID" id="200279">
    <property type="interactions" value="5"/>
</dbReference>
<dbReference type="FunCoup" id="Q61658">
    <property type="interactions" value="1144"/>
</dbReference>
<dbReference type="STRING" id="10090.ENSMUSP00000041999"/>
<dbReference type="PhosphoSitePlus" id="Q61658"/>
<dbReference type="PaxDb" id="10090-ENSMUSP00000041999"/>
<dbReference type="Antibodypedia" id="14999">
    <property type="antibodies" value="93 antibodies from 20 providers"/>
</dbReference>
<dbReference type="DNASU" id="15209"/>
<dbReference type="Ensembl" id="ENSMUST00000035433.10">
    <property type="protein sequence ID" value="ENSMUSP00000041999.8"/>
    <property type="gene ID" value="ENSMUSG00000040726.11"/>
</dbReference>
<dbReference type="Ensembl" id="ENSMUST00000224331.2">
    <property type="protein sequence ID" value="ENSMUSP00000152952.2"/>
    <property type="gene ID" value="ENSMUSG00000040726.11"/>
</dbReference>
<dbReference type="GeneID" id="15209"/>
<dbReference type="KEGG" id="mmu:15209"/>
<dbReference type="UCSC" id="uc007stj.1">
    <property type="organism name" value="mouse"/>
</dbReference>
<dbReference type="AGR" id="MGI:96071"/>
<dbReference type="CTD" id="8820"/>
<dbReference type="MGI" id="MGI:96071">
    <property type="gene designation" value="Hesx1"/>
</dbReference>
<dbReference type="VEuPathDB" id="HostDB:ENSMUSG00000040726"/>
<dbReference type="eggNOG" id="KOG0490">
    <property type="taxonomic scope" value="Eukaryota"/>
</dbReference>
<dbReference type="GeneTree" id="ENSGT00940000156780"/>
<dbReference type="HOGENOM" id="CLU_125528_0_0_1"/>
<dbReference type="InParanoid" id="Q61658"/>
<dbReference type="OMA" id="VNLCVHI"/>
<dbReference type="OrthoDB" id="6159439at2759"/>
<dbReference type="PhylomeDB" id="Q61658"/>
<dbReference type="TreeFam" id="TF335506"/>
<dbReference type="BioGRID-ORCS" id="15209">
    <property type="hits" value="0 hits in 81 CRISPR screens"/>
</dbReference>
<dbReference type="PRO" id="PR:Q61658"/>
<dbReference type="Proteomes" id="UP000000589">
    <property type="component" value="Chromosome 14"/>
</dbReference>
<dbReference type="RNAct" id="Q61658">
    <property type="molecule type" value="protein"/>
</dbReference>
<dbReference type="Bgee" id="ENSMUSG00000040726">
    <property type="expression patterns" value="Expressed in remnant of Rathke's pouch and 47 other cell types or tissues"/>
</dbReference>
<dbReference type="GO" id="GO:0005634">
    <property type="term" value="C:nucleus"/>
    <property type="evidence" value="ECO:0000314"/>
    <property type="project" value="MGI"/>
</dbReference>
<dbReference type="GO" id="GO:0003682">
    <property type="term" value="F:chromatin binding"/>
    <property type="evidence" value="ECO:0000314"/>
    <property type="project" value="MGI"/>
</dbReference>
<dbReference type="GO" id="GO:0001227">
    <property type="term" value="F:DNA-binding transcription repressor activity, RNA polymerase II-specific"/>
    <property type="evidence" value="ECO:0000314"/>
    <property type="project" value="NTNU_SB"/>
</dbReference>
<dbReference type="GO" id="GO:0042803">
    <property type="term" value="F:protein homodimerization activity"/>
    <property type="evidence" value="ECO:0000314"/>
    <property type="project" value="MGI"/>
</dbReference>
<dbReference type="GO" id="GO:0000978">
    <property type="term" value="F:RNA polymerase II cis-regulatory region sequence-specific DNA binding"/>
    <property type="evidence" value="ECO:0000314"/>
    <property type="project" value="NTNU_SB"/>
</dbReference>
<dbReference type="GO" id="GO:0000977">
    <property type="term" value="F:RNA polymerase II transcription regulatory region sequence-specific DNA binding"/>
    <property type="evidence" value="ECO:0000314"/>
    <property type="project" value="MGI"/>
</dbReference>
<dbReference type="GO" id="GO:0043565">
    <property type="term" value="F:sequence-specific DNA binding"/>
    <property type="evidence" value="ECO:0000314"/>
    <property type="project" value="MGI"/>
</dbReference>
<dbReference type="GO" id="GO:1990837">
    <property type="term" value="F:sequence-specific double-stranded DNA binding"/>
    <property type="evidence" value="ECO:0000315"/>
    <property type="project" value="MGI"/>
</dbReference>
<dbReference type="GO" id="GO:0007420">
    <property type="term" value="P:brain development"/>
    <property type="evidence" value="ECO:0000315"/>
    <property type="project" value="MGI"/>
</dbReference>
<dbReference type="GO" id="GO:0043010">
    <property type="term" value="P:camera-type eye development"/>
    <property type="evidence" value="ECO:0000315"/>
    <property type="project" value="MGI"/>
</dbReference>
<dbReference type="GO" id="GO:0060070">
    <property type="term" value="P:canonical Wnt signaling pathway"/>
    <property type="evidence" value="ECO:0000315"/>
    <property type="project" value="MGI"/>
</dbReference>
<dbReference type="GO" id="GO:0071276">
    <property type="term" value="P:cellular response to cadmium ion"/>
    <property type="evidence" value="ECO:0000314"/>
    <property type="project" value="MGI"/>
</dbReference>
<dbReference type="GO" id="GO:0070371">
    <property type="term" value="P:ERK1 and ERK2 cascade"/>
    <property type="evidence" value="ECO:0000315"/>
    <property type="project" value="MGI"/>
</dbReference>
<dbReference type="GO" id="GO:0030900">
    <property type="term" value="P:forebrain development"/>
    <property type="evidence" value="ECO:0000314"/>
    <property type="project" value="MGI"/>
</dbReference>
<dbReference type="GO" id="GO:0048853">
    <property type="term" value="P:forebrain morphogenesis"/>
    <property type="evidence" value="ECO:0000315"/>
    <property type="project" value="MGI"/>
</dbReference>
<dbReference type="GO" id="GO:0010467">
    <property type="term" value="P:gene expression"/>
    <property type="evidence" value="ECO:0000314"/>
    <property type="project" value="MGI"/>
</dbReference>
<dbReference type="GO" id="GO:0008406">
    <property type="term" value="P:gonad development"/>
    <property type="evidence" value="ECO:0000316"/>
    <property type="project" value="MGI"/>
</dbReference>
<dbReference type="GO" id="GO:0048861">
    <property type="term" value="P:leukemia inhibitory factor signaling pathway"/>
    <property type="evidence" value="ECO:0000315"/>
    <property type="project" value="MGI"/>
</dbReference>
<dbReference type="GO" id="GO:0035264">
    <property type="term" value="P:multicellular organism growth"/>
    <property type="evidence" value="ECO:0000316"/>
    <property type="project" value="MGI"/>
</dbReference>
<dbReference type="GO" id="GO:0045892">
    <property type="term" value="P:negative regulation of DNA-templated transcription"/>
    <property type="evidence" value="ECO:0000314"/>
    <property type="project" value="MGI"/>
</dbReference>
<dbReference type="GO" id="GO:0000122">
    <property type="term" value="P:negative regulation of transcription by RNA polymerase II"/>
    <property type="evidence" value="ECO:0000314"/>
    <property type="project" value="NTNU_SB"/>
</dbReference>
<dbReference type="GO" id="GO:0043584">
    <property type="term" value="P:nose development"/>
    <property type="evidence" value="ECO:0000315"/>
    <property type="project" value="MGI"/>
</dbReference>
<dbReference type="GO" id="GO:0030916">
    <property type="term" value="P:otic vesicle formation"/>
    <property type="evidence" value="ECO:0000315"/>
    <property type="project" value="MGI"/>
</dbReference>
<dbReference type="GO" id="GO:0021983">
    <property type="term" value="P:pituitary gland development"/>
    <property type="evidence" value="ECO:0000315"/>
    <property type="project" value="MGI"/>
</dbReference>
<dbReference type="GO" id="GO:0045995">
    <property type="term" value="P:regulation of embryonic development"/>
    <property type="evidence" value="ECO:0000315"/>
    <property type="project" value="MGI"/>
</dbReference>
<dbReference type="GO" id="GO:0048863">
    <property type="term" value="P:stem cell differentiation"/>
    <property type="evidence" value="ECO:0000315"/>
    <property type="project" value="MGI"/>
</dbReference>
<dbReference type="GO" id="GO:0019827">
    <property type="term" value="P:stem cell population maintenance"/>
    <property type="evidence" value="ECO:0000315"/>
    <property type="project" value="MGI"/>
</dbReference>
<dbReference type="GO" id="GO:0030878">
    <property type="term" value="P:thyroid gland development"/>
    <property type="evidence" value="ECO:0000316"/>
    <property type="project" value="MGI"/>
</dbReference>
<dbReference type="GO" id="GO:0016055">
    <property type="term" value="P:Wnt signaling pathway"/>
    <property type="evidence" value="ECO:0000314"/>
    <property type="project" value="MGI"/>
</dbReference>
<dbReference type="CDD" id="cd00086">
    <property type="entry name" value="homeodomain"/>
    <property type="match status" value="1"/>
</dbReference>
<dbReference type="FunFam" id="1.10.10.60:FF:000214">
    <property type="entry name" value="Homeobox expressed in ES cells 1"/>
    <property type="match status" value="1"/>
</dbReference>
<dbReference type="Gene3D" id="1.10.10.60">
    <property type="entry name" value="Homeodomain-like"/>
    <property type="match status" value="1"/>
</dbReference>
<dbReference type="InterPro" id="IPR001356">
    <property type="entry name" value="HD"/>
</dbReference>
<dbReference type="InterPro" id="IPR043402">
    <property type="entry name" value="Hesx1"/>
</dbReference>
<dbReference type="InterPro" id="IPR017970">
    <property type="entry name" value="Homeobox_CS"/>
</dbReference>
<dbReference type="InterPro" id="IPR009057">
    <property type="entry name" value="Homeodomain-like_sf"/>
</dbReference>
<dbReference type="PANTHER" id="PTHR46966">
    <property type="entry name" value="HOMEOBOX EXPRESSED IN ES CELLS 1"/>
    <property type="match status" value="1"/>
</dbReference>
<dbReference type="PANTHER" id="PTHR46966:SF1">
    <property type="entry name" value="HOMEOBOX EXPRESSED IN ES CELLS 1"/>
    <property type="match status" value="1"/>
</dbReference>
<dbReference type="Pfam" id="PF00046">
    <property type="entry name" value="Homeodomain"/>
    <property type="match status" value="1"/>
</dbReference>
<dbReference type="SMART" id="SM00389">
    <property type="entry name" value="HOX"/>
    <property type="match status" value="1"/>
</dbReference>
<dbReference type="SUPFAM" id="SSF46689">
    <property type="entry name" value="Homeodomain-like"/>
    <property type="match status" value="1"/>
</dbReference>
<dbReference type="PROSITE" id="PS00027">
    <property type="entry name" value="HOMEOBOX_1"/>
    <property type="match status" value="1"/>
</dbReference>
<dbReference type="PROSITE" id="PS50071">
    <property type="entry name" value="HOMEOBOX_2"/>
    <property type="match status" value="1"/>
</dbReference>
<protein>
    <recommendedName>
        <fullName>Homeobox expressed in ES cells 1</fullName>
    </recommendedName>
    <alternativeName>
        <fullName>Anterior-restricted homeobox protein</fullName>
    </alternativeName>
    <alternativeName>
        <fullName>Homeobox protein ANF</fullName>
    </alternativeName>
    <alternativeName>
        <fullName>Rathke pouch homeo box</fullName>
    </alternativeName>
</protein>